<name>GUAA_SYNS3</name>
<accession>Q0IE37</accession>
<protein>
    <recommendedName>
        <fullName evidence="1">GMP synthase [glutamine-hydrolyzing]</fullName>
        <ecNumber evidence="1">6.3.5.2</ecNumber>
    </recommendedName>
    <alternativeName>
        <fullName evidence="1">GMP synthetase</fullName>
    </alternativeName>
    <alternativeName>
        <fullName evidence="1">Glutamine amidotransferase</fullName>
    </alternativeName>
</protein>
<feature type="chain" id="PRO_1000120440" description="GMP synthase [glutamine-hydrolyzing]">
    <location>
        <begin position="1"/>
        <end position="528"/>
    </location>
</feature>
<feature type="domain" description="Glutamine amidotransferase type-1" evidence="1">
    <location>
        <begin position="13"/>
        <end position="204"/>
    </location>
</feature>
<feature type="domain" description="GMPS ATP-PPase" evidence="1">
    <location>
        <begin position="205"/>
        <end position="403"/>
    </location>
</feature>
<feature type="active site" description="Nucleophile" evidence="1">
    <location>
        <position position="90"/>
    </location>
</feature>
<feature type="active site" evidence="1">
    <location>
        <position position="178"/>
    </location>
</feature>
<feature type="active site" evidence="1">
    <location>
        <position position="180"/>
    </location>
</feature>
<feature type="binding site" evidence="1">
    <location>
        <begin position="232"/>
        <end position="238"/>
    </location>
    <ligand>
        <name>ATP</name>
        <dbReference type="ChEBI" id="CHEBI:30616"/>
    </ligand>
</feature>
<dbReference type="EC" id="6.3.5.2" evidence="1"/>
<dbReference type="EMBL" id="CP000435">
    <property type="protein sequence ID" value="ABI47248.1"/>
    <property type="molecule type" value="Genomic_DNA"/>
</dbReference>
<dbReference type="RefSeq" id="WP_011618037.1">
    <property type="nucleotide sequence ID" value="NC_008319.1"/>
</dbReference>
<dbReference type="SMR" id="Q0IE37"/>
<dbReference type="STRING" id="64471.sync_0047"/>
<dbReference type="KEGG" id="syg:sync_0047"/>
<dbReference type="eggNOG" id="COG0518">
    <property type="taxonomic scope" value="Bacteria"/>
</dbReference>
<dbReference type="eggNOG" id="COG0519">
    <property type="taxonomic scope" value="Bacteria"/>
</dbReference>
<dbReference type="HOGENOM" id="CLU_014340_0_5_3"/>
<dbReference type="OrthoDB" id="9802219at2"/>
<dbReference type="UniPathway" id="UPA00189">
    <property type="reaction ID" value="UER00296"/>
</dbReference>
<dbReference type="Proteomes" id="UP000001961">
    <property type="component" value="Chromosome"/>
</dbReference>
<dbReference type="GO" id="GO:0005829">
    <property type="term" value="C:cytosol"/>
    <property type="evidence" value="ECO:0007669"/>
    <property type="project" value="TreeGrafter"/>
</dbReference>
<dbReference type="GO" id="GO:0005524">
    <property type="term" value="F:ATP binding"/>
    <property type="evidence" value="ECO:0007669"/>
    <property type="project" value="UniProtKB-UniRule"/>
</dbReference>
<dbReference type="GO" id="GO:0003921">
    <property type="term" value="F:GMP synthase activity"/>
    <property type="evidence" value="ECO:0007669"/>
    <property type="project" value="InterPro"/>
</dbReference>
<dbReference type="CDD" id="cd01742">
    <property type="entry name" value="GATase1_GMP_Synthase"/>
    <property type="match status" value="1"/>
</dbReference>
<dbReference type="CDD" id="cd01997">
    <property type="entry name" value="GMP_synthase_C"/>
    <property type="match status" value="1"/>
</dbReference>
<dbReference type="FunFam" id="3.30.300.10:FF:000002">
    <property type="entry name" value="GMP synthase [glutamine-hydrolyzing]"/>
    <property type="match status" value="1"/>
</dbReference>
<dbReference type="FunFam" id="3.40.50.620:FF:000001">
    <property type="entry name" value="GMP synthase [glutamine-hydrolyzing]"/>
    <property type="match status" value="1"/>
</dbReference>
<dbReference type="FunFam" id="3.40.50.880:FF:000001">
    <property type="entry name" value="GMP synthase [glutamine-hydrolyzing]"/>
    <property type="match status" value="1"/>
</dbReference>
<dbReference type="Gene3D" id="3.30.300.10">
    <property type="match status" value="1"/>
</dbReference>
<dbReference type="Gene3D" id="3.40.50.880">
    <property type="match status" value="1"/>
</dbReference>
<dbReference type="Gene3D" id="3.40.50.620">
    <property type="entry name" value="HUPs"/>
    <property type="match status" value="1"/>
</dbReference>
<dbReference type="HAMAP" id="MF_00344">
    <property type="entry name" value="GMP_synthase"/>
    <property type="match status" value="1"/>
</dbReference>
<dbReference type="InterPro" id="IPR029062">
    <property type="entry name" value="Class_I_gatase-like"/>
</dbReference>
<dbReference type="InterPro" id="IPR017926">
    <property type="entry name" value="GATASE"/>
</dbReference>
<dbReference type="InterPro" id="IPR001674">
    <property type="entry name" value="GMP_synth_C"/>
</dbReference>
<dbReference type="InterPro" id="IPR004739">
    <property type="entry name" value="GMP_synth_GATase"/>
</dbReference>
<dbReference type="InterPro" id="IPR022955">
    <property type="entry name" value="GMP_synthase"/>
</dbReference>
<dbReference type="InterPro" id="IPR025777">
    <property type="entry name" value="GMPS_ATP_PPase_dom"/>
</dbReference>
<dbReference type="InterPro" id="IPR014729">
    <property type="entry name" value="Rossmann-like_a/b/a_fold"/>
</dbReference>
<dbReference type="NCBIfam" id="TIGR00884">
    <property type="entry name" value="guaA_Cterm"/>
    <property type="match status" value="1"/>
</dbReference>
<dbReference type="NCBIfam" id="TIGR00888">
    <property type="entry name" value="guaA_Nterm"/>
    <property type="match status" value="1"/>
</dbReference>
<dbReference type="NCBIfam" id="NF000848">
    <property type="entry name" value="PRK00074.1"/>
    <property type="match status" value="1"/>
</dbReference>
<dbReference type="PANTHER" id="PTHR11922:SF2">
    <property type="entry name" value="GMP SYNTHASE [GLUTAMINE-HYDROLYZING]"/>
    <property type="match status" value="1"/>
</dbReference>
<dbReference type="PANTHER" id="PTHR11922">
    <property type="entry name" value="GMP SYNTHASE-RELATED"/>
    <property type="match status" value="1"/>
</dbReference>
<dbReference type="Pfam" id="PF00117">
    <property type="entry name" value="GATase"/>
    <property type="match status" value="1"/>
</dbReference>
<dbReference type="Pfam" id="PF00958">
    <property type="entry name" value="GMP_synt_C"/>
    <property type="match status" value="1"/>
</dbReference>
<dbReference type="PRINTS" id="PR00097">
    <property type="entry name" value="ANTSNTHASEII"/>
</dbReference>
<dbReference type="PRINTS" id="PR00099">
    <property type="entry name" value="CPSGATASE"/>
</dbReference>
<dbReference type="PRINTS" id="PR00096">
    <property type="entry name" value="GATASE"/>
</dbReference>
<dbReference type="SUPFAM" id="SSF52402">
    <property type="entry name" value="Adenine nucleotide alpha hydrolases-like"/>
    <property type="match status" value="1"/>
</dbReference>
<dbReference type="SUPFAM" id="SSF52317">
    <property type="entry name" value="Class I glutamine amidotransferase-like"/>
    <property type="match status" value="1"/>
</dbReference>
<dbReference type="SUPFAM" id="SSF54810">
    <property type="entry name" value="GMP synthetase C-terminal dimerisation domain"/>
    <property type="match status" value="1"/>
</dbReference>
<dbReference type="PROSITE" id="PS51273">
    <property type="entry name" value="GATASE_TYPE_1"/>
    <property type="match status" value="1"/>
</dbReference>
<dbReference type="PROSITE" id="PS51553">
    <property type="entry name" value="GMPS_ATP_PPASE"/>
    <property type="match status" value="1"/>
</dbReference>
<evidence type="ECO:0000255" key="1">
    <source>
        <dbReference type="HAMAP-Rule" id="MF_00344"/>
    </source>
</evidence>
<organism>
    <name type="scientific">Synechococcus sp. (strain CC9311)</name>
    <dbReference type="NCBI Taxonomy" id="64471"/>
    <lineage>
        <taxon>Bacteria</taxon>
        <taxon>Bacillati</taxon>
        <taxon>Cyanobacteriota</taxon>
        <taxon>Cyanophyceae</taxon>
        <taxon>Synechococcales</taxon>
        <taxon>Synechococcaceae</taxon>
        <taxon>Synechococcus</taxon>
    </lineage>
</organism>
<keyword id="KW-0067">ATP-binding</keyword>
<keyword id="KW-0315">Glutamine amidotransferase</keyword>
<keyword id="KW-0332">GMP biosynthesis</keyword>
<keyword id="KW-0436">Ligase</keyword>
<keyword id="KW-0547">Nucleotide-binding</keyword>
<keyword id="KW-0658">Purine biosynthesis</keyword>
<keyword id="KW-1185">Reference proteome</keyword>
<proteinExistence type="inferred from homology"/>
<reference key="1">
    <citation type="journal article" date="2006" name="Proc. Natl. Acad. Sci. U.S.A.">
        <title>Genome sequence of Synechococcus CC9311: insights into adaptation to a coastal environment.</title>
        <authorList>
            <person name="Palenik B."/>
            <person name="Ren Q."/>
            <person name="Dupont C.L."/>
            <person name="Myers G.S."/>
            <person name="Heidelberg J.F."/>
            <person name="Badger J.H."/>
            <person name="Madupu R."/>
            <person name="Nelson W.C."/>
            <person name="Brinkac L.M."/>
            <person name="Dodson R.J."/>
            <person name="Durkin A.S."/>
            <person name="Daugherty S.C."/>
            <person name="Sullivan S.A."/>
            <person name="Khouri H."/>
            <person name="Mohamoud Y."/>
            <person name="Halpin R."/>
            <person name="Paulsen I.T."/>
        </authorList>
    </citation>
    <scope>NUCLEOTIDE SEQUENCE [LARGE SCALE GENOMIC DNA]</scope>
    <source>
        <strain>CC9311</strain>
    </source>
</reference>
<gene>
    <name evidence="1" type="primary">guaA</name>
    <name type="ordered locus">sync_0047</name>
</gene>
<comment type="function">
    <text evidence="1">Catalyzes the synthesis of GMP from XMP.</text>
</comment>
<comment type="catalytic activity">
    <reaction evidence="1">
        <text>XMP + L-glutamine + ATP + H2O = GMP + L-glutamate + AMP + diphosphate + 2 H(+)</text>
        <dbReference type="Rhea" id="RHEA:11680"/>
        <dbReference type="ChEBI" id="CHEBI:15377"/>
        <dbReference type="ChEBI" id="CHEBI:15378"/>
        <dbReference type="ChEBI" id="CHEBI:29985"/>
        <dbReference type="ChEBI" id="CHEBI:30616"/>
        <dbReference type="ChEBI" id="CHEBI:33019"/>
        <dbReference type="ChEBI" id="CHEBI:57464"/>
        <dbReference type="ChEBI" id="CHEBI:58115"/>
        <dbReference type="ChEBI" id="CHEBI:58359"/>
        <dbReference type="ChEBI" id="CHEBI:456215"/>
        <dbReference type="EC" id="6.3.5.2"/>
    </reaction>
</comment>
<comment type="pathway">
    <text evidence="1">Purine metabolism; GMP biosynthesis; GMP from XMP (L-Gln route): step 1/1.</text>
</comment>
<comment type="subunit">
    <text evidence="1">Homodimer.</text>
</comment>
<sequence length="528" mass="58658">MSSVQSEGQRKPAIVILDFGSQYSELIARRVRETEVFSVVLGYSTSAEELRALAPRGIILSGGPSSVYADEAPLCDPAIWDLGVPVLGVCYGMQLMVQQLGGQVVAATGKAEYGKAPLKVDDPTALLTNVESGSTMWMSHGDSVEALPDGFLRLAHTANTPEAAIANHKRRLYGVQFHPEVVHSTGGMVMIRNFVYHICGCEPDWTTEAFIDEAVANVRDQVGQKRVLLALSGGVDSSTLAFLLKKAIGDQLTCMFIDQGFMRKGEPEFLMEFFDRKFNIHVEYINARERFIKKLDGITDPEEKRKIIGTEFIRVFEEESRRLGPFDYLVQGTLYPDVIESAGTNVDPKTGERVAVKIKSHHNVGGLPKDLRFKLVEPLRKLFKDEVRKVGRTLGLPEEIVSRHPFPGPGLAIRILGEVTEEKLDCLRDADLIVREEVNAAGLYHDIWQAFAVLLPVRSVGVMGDKRTYAWPIVLRCVSSEDGMTADWSRLPYDLMEVISNRIVNEVKGVNRVVMDITSKPPGTIEWE</sequence>